<evidence type="ECO:0000250" key="1"/>
<evidence type="ECO:0000255" key="2">
    <source>
        <dbReference type="HAMAP-Rule" id="MF_01057"/>
    </source>
</evidence>
<evidence type="ECO:0000305" key="3"/>
<protein>
    <recommendedName>
        <fullName evidence="2">tRNA (guanine-N(7)-)-methyltransferase</fullName>
        <ecNumber evidence="2">2.1.1.33</ecNumber>
    </recommendedName>
    <alternativeName>
        <fullName evidence="2">tRNA (guanine(46)-N(7))-methyltransferase</fullName>
    </alternativeName>
    <alternativeName>
        <fullName evidence="2">tRNA(m7G46)-methyltransferase</fullName>
    </alternativeName>
</protein>
<keyword id="KW-0489">Methyltransferase</keyword>
<keyword id="KW-1185">Reference proteome</keyword>
<keyword id="KW-0949">S-adenosyl-L-methionine</keyword>
<keyword id="KW-0808">Transferase</keyword>
<keyword id="KW-0819">tRNA processing</keyword>
<sequence>MGKNKLEKFADMASYPHVFEYPYSAVDNVPFDMKGKWHQEFFGNDHPIVLELGCGRGEYTVGLGRMFPDKNFIAVDIKGSRMWTGATESLQAGMKNVAFLRTNIEIIERFFAAGEVSEIWLTFSDPQMKKATKRLTSTYFMERYRKFLKPDGIIHLKTDSNFMFTYTKYMIEANQLPVEFITEDLYHSDLVDDILSIKTYYEQQWLDRGLNIKYIKFRLPQEGVLQEPDVEIELDPYRSYNRSKRSGLQTSK</sequence>
<proteinExistence type="inferred from homology"/>
<reference key="1">
    <citation type="journal article" date="2003" name="Science">
        <title>A genomic view of the human-Bacteroides thetaiotaomicron symbiosis.</title>
        <authorList>
            <person name="Xu J."/>
            <person name="Bjursell M.K."/>
            <person name="Himrod J."/>
            <person name="Deng S."/>
            <person name="Carmichael L.K."/>
            <person name="Chiang H.C."/>
            <person name="Hooper L.V."/>
            <person name="Gordon J.I."/>
        </authorList>
    </citation>
    <scope>NUCLEOTIDE SEQUENCE [LARGE SCALE GENOMIC DNA]</scope>
    <source>
        <strain>ATCC 29148 / DSM 2079 / JCM 5827 / CCUG 10774 / NCTC 10582 / VPI-5482 / E50</strain>
    </source>
</reference>
<gene>
    <name evidence="2" type="primary">trmB</name>
    <name type="ordered locus">BT_3894</name>
</gene>
<organism>
    <name type="scientific">Bacteroides thetaiotaomicron (strain ATCC 29148 / DSM 2079 / JCM 5827 / CCUG 10774 / NCTC 10582 / VPI-5482 / E50)</name>
    <dbReference type="NCBI Taxonomy" id="226186"/>
    <lineage>
        <taxon>Bacteria</taxon>
        <taxon>Pseudomonadati</taxon>
        <taxon>Bacteroidota</taxon>
        <taxon>Bacteroidia</taxon>
        <taxon>Bacteroidales</taxon>
        <taxon>Bacteroidaceae</taxon>
        <taxon>Bacteroides</taxon>
    </lineage>
</organism>
<name>TRMB_BACTN</name>
<comment type="function">
    <text evidence="2">Catalyzes the formation of N(7)-methylguanine at position 46 (m7G46) in tRNA.</text>
</comment>
<comment type="catalytic activity">
    <reaction evidence="2">
        <text>guanosine(46) in tRNA + S-adenosyl-L-methionine = N(7)-methylguanosine(46) in tRNA + S-adenosyl-L-homocysteine</text>
        <dbReference type="Rhea" id="RHEA:42708"/>
        <dbReference type="Rhea" id="RHEA-COMP:10188"/>
        <dbReference type="Rhea" id="RHEA-COMP:10189"/>
        <dbReference type="ChEBI" id="CHEBI:57856"/>
        <dbReference type="ChEBI" id="CHEBI:59789"/>
        <dbReference type="ChEBI" id="CHEBI:74269"/>
        <dbReference type="ChEBI" id="CHEBI:74480"/>
        <dbReference type="EC" id="2.1.1.33"/>
    </reaction>
</comment>
<comment type="pathway">
    <text evidence="2">tRNA modification; N(7)-methylguanine-tRNA biosynthesis.</text>
</comment>
<comment type="similarity">
    <text evidence="2">Belongs to the class I-like SAM-binding methyltransferase superfamily. TrmB family.</text>
</comment>
<comment type="sequence caution" evidence="3">
    <conflict type="erroneous initiation">
        <sequence resource="EMBL-CDS" id="AAO78999"/>
    </conflict>
</comment>
<accession>Q8A0X7</accession>
<dbReference type="EC" id="2.1.1.33" evidence="2"/>
<dbReference type="EMBL" id="AE015928">
    <property type="protein sequence ID" value="AAO78999.1"/>
    <property type="status" value="ALT_INIT"/>
    <property type="molecule type" value="Genomic_DNA"/>
</dbReference>
<dbReference type="RefSeq" id="NP_812805.1">
    <property type="nucleotide sequence ID" value="NC_004663.1"/>
</dbReference>
<dbReference type="RefSeq" id="WP_032840567.1">
    <property type="nucleotide sequence ID" value="NC_004663.1"/>
</dbReference>
<dbReference type="SMR" id="Q8A0X7"/>
<dbReference type="FunCoup" id="Q8A0X7">
    <property type="interactions" value="307"/>
</dbReference>
<dbReference type="STRING" id="226186.BT_3894"/>
<dbReference type="PaxDb" id="226186-BT_3894"/>
<dbReference type="EnsemblBacteria" id="AAO78999">
    <property type="protein sequence ID" value="AAO78999"/>
    <property type="gene ID" value="BT_3894"/>
</dbReference>
<dbReference type="GeneID" id="60925067"/>
<dbReference type="KEGG" id="bth:BT_3894"/>
<dbReference type="PATRIC" id="fig|226186.12.peg.3959"/>
<dbReference type="eggNOG" id="COG0220">
    <property type="taxonomic scope" value="Bacteria"/>
</dbReference>
<dbReference type="HOGENOM" id="CLU_050910_2_2_10"/>
<dbReference type="InParanoid" id="Q8A0X7"/>
<dbReference type="OrthoDB" id="9802090at2"/>
<dbReference type="UniPathway" id="UPA00989"/>
<dbReference type="Proteomes" id="UP000001414">
    <property type="component" value="Chromosome"/>
</dbReference>
<dbReference type="GO" id="GO:0043527">
    <property type="term" value="C:tRNA methyltransferase complex"/>
    <property type="evidence" value="ECO:0000318"/>
    <property type="project" value="GO_Central"/>
</dbReference>
<dbReference type="GO" id="GO:0008176">
    <property type="term" value="F:tRNA (guanine(46)-N7)-methyltransferase activity"/>
    <property type="evidence" value="ECO:0000318"/>
    <property type="project" value="GO_Central"/>
</dbReference>
<dbReference type="GO" id="GO:0036265">
    <property type="term" value="P:RNA (guanine-N7)-methylation"/>
    <property type="evidence" value="ECO:0000318"/>
    <property type="project" value="GO_Central"/>
</dbReference>
<dbReference type="GO" id="GO:0030488">
    <property type="term" value="P:tRNA methylation"/>
    <property type="evidence" value="ECO:0000318"/>
    <property type="project" value="GO_Central"/>
</dbReference>
<dbReference type="FunFam" id="3.40.50.150:FF:000179">
    <property type="entry name" value="tRNA (guanine-N(7)-)-methyltransferase"/>
    <property type="match status" value="1"/>
</dbReference>
<dbReference type="Gene3D" id="3.40.50.150">
    <property type="entry name" value="Vaccinia Virus protein VP39"/>
    <property type="match status" value="1"/>
</dbReference>
<dbReference type="HAMAP" id="MF_01057">
    <property type="entry name" value="tRNA_methyltr_TrmB"/>
    <property type="match status" value="1"/>
</dbReference>
<dbReference type="InterPro" id="IPR029063">
    <property type="entry name" value="SAM-dependent_MTases_sf"/>
</dbReference>
<dbReference type="InterPro" id="IPR003358">
    <property type="entry name" value="tRNA_(Gua-N-7)_MeTrfase_Trmb"/>
</dbReference>
<dbReference type="InterPro" id="IPR055361">
    <property type="entry name" value="tRNA_methyltr_TrmB_bact"/>
</dbReference>
<dbReference type="NCBIfam" id="NF001080">
    <property type="entry name" value="PRK00121.2-2"/>
    <property type="match status" value="1"/>
</dbReference>
<dbReference type="PANTHER" id="PTHR23417">
    <property type="entry name" value="3-DEOXY-D-MANNO-OCTULOSONIC-ACID TRANSFERASE/TRNA GUANINE-N 7 - -METHYLTRANSFERASE"/>
    <property type="match status" value="1"/>
</dbReference>
<dbReference type="PANTHER" id="PTHR23417:SF14">
    <property type="entry name" value="PENTACOTRIPEPTIDE-REPEAT REGION OF PRORP DOMAIN-CONTAINING PROTEIN"/>
    <property type="match status" value="1"/>
</dbReference>
<dbReference type="Pfam" id="PF02390">
    <property type="entry name" value="Methyltransf_4"/>
    <property type="match status" value="1"/>
</dbReference>
<dbReference type="SUPFAM" id="SSF53335">
    <property type="entry name" value="S-adenosyl-L-methionine-dependent methyltransferases"/>
    <property type="match status" value="1"/>
</dbReference>
<dbReference type="PROSITE" id="PS51625">
    <property type="entry name" value="SAM_MT_TRMB"/>
    <property type="match status" value="1"/>
</dbReference>
<feature type="chain" id="PRO_0000171296" description="tRNA (guanine-N(7)-)-methyltransferase">
    <location>
        <begin position="1"/>
        <end position="252"/>
    </location>
</feature>
<feature type="active site" evidence="1">
    <location>
        <position position="125"/>
    </location>
</feature>
<feature type="binding site" evidence="2">
    <location>
        <position position="51"/>
    </location>
    <ligand>
        <name>S-adenosyl-L-methionine</name>
        <dbReference type="ChEBI" id="CHEBI:59789"/>
    </ligand>
</feature>
<feature type="binding site" evidence="2">
    <location>
        <position position="76"/>
    </location>
    <ligand>
        <name>S-adenosyl-L-methionine</name>
        <dbReference type="ChEBI" id="CHEBI:59789"/>
    </ligand>
</feature>
<feature type="binding site" evidence="2">
    <location>
        <position position="103"/>
    </location>
    <ligand>
        <name>S-adenosyl-L-methionine</name>
        <dbReference type="ChEBI" id="CHEBI:59789"/>
    </ligand>
</feature>
<feature type="binding site" evidence="2">
    <location>
        <position position="125"/>
    </location>
    <ligand>
        <name>S-adenosyl-L-methionine</name>
        <dbReference type="ChEBI" id="CHEBI:59789"/>
    </ligand>
</feature>
<feature type="binding site" evidence="2">
    <location>
        <position position="129"/>
    </location>
    <ligand>
        <name>substrate</name>
    </ligand>
</feature>
<feature type="binding site" evidence="2">
    <location>
        <position position="159"/>
    </location>
    <ligand>
        <name>substrate</name>
    </ligand>
</feature>
<feature type="binding site" evidence="2">
    <location>
        <begin position="199"/>
        <end position="202"/>
    </location>
    <ligand>
        <name>substrate</name>
    </ligand>
</feature>